<name>COAE_CORGL</name>
<evidence type="ECO:0000255" key="1">
    <source>
        <dbReference type="HAMAP-Rule" id="MF_00376"/>
    </source>
</evidence>
<evidence type="ECO:0000305" key="2"/>
<protein>
    <recommendedName>
        <fullName evidence="1">Dephospho-CoA kinase</fullName>
        <ecNumber evidence="1">2.7.1.24</ecNumber>
    </recommendedName>
    <alternativeName>
        <fullName evidence="1">Dephosphocoenzyme A kinase</fullName>
    </alternativeName>
</protein>
<keyword id="KW-0067">ATP-binding</keyword>
<keyword id="KW-0173">Coenzyme A biosynthesis</keyword>
<keyword id="KW-0963">Cytoplasm</keyword>
<keyword id="KW-0418">Kinase</keyword>
<keyword id="KW-0547">Nucleotide-binding</keyword>
<keyword id="KW-1185">Reference proteome</keyword>
<keyword id="KW-0808">Transferase</keyword>
<gene>
    <name evidence="1" type="primary">coaE</name>
    <name type="ordered locus">Cgl1361</name>
    <name type="ordered locus">cg1538</name>
</gene>
<organism>
    <name type="scientific">Corynebacterium glutamicum (strain ATCC 13032 / DSM 20300 / JCM 1318 / BCRC 11384 / CCUG 27702 / LMG 3730 / NBRC 12168 / NCIMB 10025 / NRRL B-2784 / 534)</name>
    <dbReference type="NCBI Taxonomy" id="196627"/>
    <lineage>
        <taxon>Bacteria</taxon>
        <taxon>Bacillati</taxon>
        <taxon>Actinomycetota</taxon>
        <taxon>Actinomycetes</taxon>
        <taxon>Mycobacteriales</taxon>
        <taxon>Corynebacteriaceae</taxon>
        <taxon>Corynebacterium</taxon>
    </lineage>
</organism>
<proteinExistence type="inferred from homology"/>
<comment type="function">
    <text evidence="1">Catalyzes the phosphorylation of the 3'-hydroxyl group of dephosphocoenzyme A to form coenzyme A.</text>
</comment>
<comment type="catalytic activity">
    <reaction evidence="1">
        <text>3'-dephospho-CoA + ATP = ADP + CoA + H(+)</text>
        <dbReference type="Rhea" id="RHEA:18245"/>
        <dbReference type="ChEBI" id="CHEBI:15378"/>
        <dbReference type="ChEBI" id="CHEBI:30616"/>
        <dbReference type="ChEBI" id="CHEBI:57287"/>
        <dbReference type="ChEBI" id="CHEBI:57328"/>
        <dbReference type="ChEBI" id="CHEBI:456216"/>
        <dbReference type="EC" id="2.7.1.24"/>
    </reaction>
</comment>
<comment type="pathway">
    <text evidence="1">Cofactor biosynthesis; coenzyme A biosynthesis; CoA from (R)-pantothenate: step 5/5.</text>
</comment>
<comment type="subcellular location">
    <subcellularLocation>
        <location evidence="1">Cytoplasm</location>
    </subcellularLocation>
</comment>
<comment type="similarity">
    <text evidence="1 2">Belongs to the CoaE family.</text>
</comment>
<accession>P58897</accession>
<sequence length="200" mass="21663">MLRIGLTGGIGSGKSTVADLLSSEGFLIVDADQVARDIVEPGQPALAELAEAFGQDILKPDGTLDRAGLAAKAFVSEEQTALLNAITHPRIAEESARRFNEAEDQGAKVAVYDMPLLVEKGLDRKMDLVVVVDVDVEERVRRLVEKRGLTEDDVRRRIASQVPDDVRLKAADIVVDNNGTLEDLHAEASKLIAEILSRVN</sequence>
<dbReference type="EC" id="2.7.1.24" evidence="1"/>
<dbReference type="EMBL" id="BA000036">
    <property type="protein sequence ID" value="BAB98754.1"/>
    <property type="molecule type" value="Genomic_DNA"/>
</dbReference>
<dbReference type="EMBL" id="BX927152">
    <property type="protein sequence ID" value="CAF21370.1"/>
    <property type="molecule type" value="Genomic_DNA"/>
</dbReference>
<dbReference type="RefSeq" id="NP_600577.1">
    <property type="nucleotide sequence ID" value="NC_003450.3"/>
</dbReference>
<dbReference type="RefSeq" id="WP_011014305.1">
    <property type="nucleotide sequence ID" value="NC_006958.1"/>
</dbReference>
<dbReference type="SMR" id="P58897"/>
<dbReference type="STRING" id="196627.cg1538"/>
<dbReference type="GeneID" id="1019336"/>
<dbReference type="KEGG" id="cgb:cg1538"/>
<dbReference type="KEGG" id="cgl:Cgl1361"/>
<dbReference type="PATRIC" id="fig|196627.13.peg.1328"/>
<dbReference type="eggNOG" id="COG0237">
    <property type="taxonomic scope" value="Bacteria"/>
</dbReference>
<dbReference type="HOGENOM" id="CLU_057180_1_1_11"/>
<dbReference type="OrthoDB" id="9812943at2"/>
<dbReference type="BioCyc" id="CORYNE:G18NG-10940-MONOMER"/>
<dbReference type="UniPathway" id="UPA00241">
    <property type="reaction ID" value="UER00356"/>
</dbReference>
<dbReference type="Proteomes" id="UP000000582">
    <property type="component" value="Chromosome"/>
</dbReference>
<dbReference type="Proteomes" id="UP000001009">
    <property type="component" value="Chromosome"/>
</dbReference>
<dbReference type="GO" id="GO:0005737">
    <property type="term" value="C:cytoplasm"/>
    <property type="evidence" value="ECO:0007669"/>
    <property type="project" value="UniProtKB-SubCell"/>
</dbReference>
<dbReference type="GO" id="GO:0005524">
    <property type="term" value="F:ATP binding"/>
    <property type="evidence" value="ECO:0007669"/>
    <property type="project" value="UniProtKB-UniRule"/>
</dbReference>
<dbReference type="GO" id="GO:0004140">
    <property type="term" value="F:dephospho-CoA kinase activity"/>
    <property type="evidence" value="ECO:0007669"/>
    <property type="project" value="UniProtKB-UniRule"/>
</dbReference>
<dbReference type="GO" id="GO:0015937">
    <property type="term" value="P:coenzyme A biosynthetic process"/>
    <property type="evidence" value="ECO:0007669"/>
    <property type="project" value="UniProtKB-UniRule"/>
</dbReference>
<dbReference type="CDD" id="cd02022">
    <property type="entry name" value="DPCK"/>
    <property type="match status" value="1"/>
</dbReference>
<dbReference type="Gene3D" id="3.40.50.300">
    <property type="entry name" value="P-loop containing nucleotide triphosphate hydrolases"/>
    <property type="match status" value="1"/>
</dbReference>
<dbReference type="HAMAP" id="MF_00376">
    <property type="entry name" value="Dephospho_CoA_kinase"/>
    <property type="match status" value="1"/>
</dbReference>
<dbReference type="InterPro" id="IPR001977">
    <property type="entry name" value="Depp_CoAkinase"/>
</dbReference>
<dbReference type="InterPro" id="IPR027417">
    <property type="entry name" value="P-loop_NTPase"/>
</dbReference>
<dbReference type="NCBIfam" id="TIGR00152">
    <property type="entry name" value="dephospho-CoA kinase"/>
    <property type="match status" value="1"/>
</dbReference>
<dbReference type="NCBIfam" id="NF002879">
    <property type="entry name" value="PRK03333.1"/>
    <property type="match status" value="1"/>
</dbReference>
<dbReference type="PANTHER" id="PTHR10695:SF46">
    <property type="entry name" value="BIFUNCTIONAL COENZYME A SYNTHASE-RELATED"/>
    <property type="match status" value="1"/>
</dbReference>
<dbReference type="PANTHER" id="PTHR10695">
    <property type="entry name" value="DEPHOSPHO-COA KINASE-RELATED"/>
    <property type="match status" value="1"/>
</dbReference>
<dbReference type="Pfam" id="PF01121">
    <property type="entry name" value="CoaE"/>
    <property type="match status" value="1"/>
</dbReference>
<dbReference type="SUPFAM" id="SSF52540">
    <property type="entry name" value="P-loop containing nucleoside triphosphate hydrolases"/>
    <property type="match status" value="1"/>
</dbReference>
<dbReference type="PROSITE" id="PS51219">
    <property type="entry name" value="DPCK"/>
    <property type="match status" value="1"/>
</dbReference>
<reference key="1">
    <citation type="journal article" date="2003" name="Appl. Microbiol. Biotechnol.">
        <title>The Corynebacterium glutamicum genome: features and impacts on biotechnological processes.</title>
        <authorList>
            <person name="Ikeda M."/>
            <person name="Nakagawa S."/>
        </authorList>
    </citation>
    <scope>NUCLEOTIDE SEQUENCE [LARGE SCALE GENOMIC DNA]</scope>
    <source>
        <strain>ATCC 13032 / DSM 20300 / JCM 1318 / BCRC 11384 / CCUG 27702 / LMG 3730 / NBRC 12168 / NCIMB 10025 / NRRL B-2784 / 534</strain>
    </source>
</reference>
<reference key="2">
    <citation type="journal article" date="2003" name="J. Biotechnol.">
        <title>The complete Corynebacterium glutamicum ATCC 13032 genome sequence and its impact on the production of L-aspartate-derived amino acids and vitamins.</title>
        <authorList>
            <person name="Kalinowski J."/>
            <person name="Bathe B."/>
            <person name="Bartels D."/>
            <person name="Bischoff N."/>
            <person name="Bott M."/>
            <person name="Burkovski A."/>
            <person name="Dusch N."/>
            <person name="Eggeling L."/>
            <person name="Eikmanns B.J."/>
            <person name="Gaigalat L."/>
            <person name="Goesmann A."/>
            <person name="Hartmann M."/>
            <person name="Huthmacher K."/>
            <person name="Kraemer R."/>
            <person name="Linke B."/>
            <person name="McHardy A.C."/>
            <person name="Meyer F."/>
            <person name="Moeckel B."/>
            <person name="Pfefferle W."/>
            <person name="Puehler A."/>
            <person name="Rey D.A."/>
            <person name="Rueckert C."/>
            <person name="Rupp O."/>
            <person name="Sahm H."/>
            <person name="Wendisch V.F."/>
            <person name="Wiegraebe I."/>
            <person name="Tauch A."/>
        </authorList>
    </citation>
    <scope>NUCLEOTIDE SEQUENCE [LARGE SCALE GENOMIC DNA]</scope>
    <source>
        <strain>ATCC 13032 / DSM 20300 / JCM 1318 / BCRC 11384 / CCUG 27702 / LMG 3730 / NBRC 12168 / NCIMB 10025 / NRRL B-2784 / 534</strain>
    </source>
</reference>
<feature type="chain" id="PRO_0000172936" description="Dephospho-CoA kinase">
    <location>
        <begin position="1"/>
        <end position="200"/>
    </location>
</feature>
<feature type="domain" description="DPCK" evidence="1">
    <location>
        <begin position="3"/>
        <end position="200"/>
    </location>
</feature>
<feature type="binding site" evidence="1">
    <location>
        <begin position="11"/>
        <end position="16"/>
    </location>
    <ligand>
        <name>ATP</name>
        <dbReference type="ChEBI" id="CHEBI:30616"/>
    </ligand>
</feature>